<name>SYA_CLOK5</name>
<organism>
    <name type="scientific">Clostridium kluyveri (strain ATCC 8527 / DSM 555 / NBRC 12016 / NCIMB 10680 / K1)</name>
    <dbReference type="NCBI Taxonomy" id="431943"/>
    <lineage>
        <taxon>Bacteria</taxon>
        <taxon>Bacillati</taxon>
        <taxon>Bacillota</taxon>
        <taxon>Clostridia</taxon>
        <taxon>Eubacteriales</taxon>
        <taxon>Clostridiaceae</taxon>
        <taxon>Clostridium</taxon>
    </lineage>
</organism>
<reference key="1">
    <citation type="journal article" date="2008" name="Proc. Natl. Acad. Sci. U.S.A.">
        <title>The genome of Clostridium kluyveri, a strict anaerobe with unique metabolic features.</title>
        <authorList>
            <person name="Seedorf H."/>
            <person name="Fricke W.F."/>
            <person name="Veith B."/>
            <person name="Brueggemann H."/>
            <person name="Liesegang H."/>
            <person name="Strittmatter A."/>
            <person name="Miethke M."/>
            <person name="Buckel W."/>
            <person name="Hinderberger J."/>
            <person name="Li F."/>
            <person name="Hagemeier C."/>
            <person name="Thauer R.K."/>
            <person name="Gottschalk G."/>
        </authorList>
    </citation>
    <scope>NUCLEOTIDE SEQUENCE [LARGE SCALE GENOMIC DNA]</scope>
    <source>
        <strain>ATCC 8527 / DSM 555 / NBRC 12016 / NCIMB 10680 / K1</strain>
    </source>
</reference>
<keyword id="KW-0030">Aminoacyl-tRNA synthetase</keyword>
<keyword id="KW-0067">ATP-binding</keyword>
<keyword id="KW-0963">Cytoplasm</keyword>
<keyword id="KW-0436">Ligase</keyword>
<keyword id="KW-0479">Metal-binding</keyword>
<keyword id="KW-0547">Nucleotide-binding</keyword>
<keyword id="KW-0648">Protein biosynthesis</keyword>
<keyword id="KW-1185">Reference proteome</keyword>
<keyword id="KW-0694">RNA-binding</keyword>
<keyword id="KW-0820">tRNA-binding</keyword>
<keyword id="KW-0862">Zinc</keyword>
<sequence>MEKLGLNQIREMYLSFFEKKAHLRLPSFSLVPQNDKSLLLINAGMTPLKPYFTGLKVPPSKRVATCQKCIRTGDIENVGKTSRHGTFFEMLGNFSFGDYFKKEAIPWAWEFITEVLKLPKDRLYVTIYLDDDEAYDIWVKSTDVDPSKIFRLGKEDNFWEHGVGPCGPCSEIYYDRAQEKINSVEEFVEAADNDKIVEFWNLVFTQFDKDENGNYNRLSNPNIDTGMGLERMATIMQGENSIFEVDTINAILKEVCNISGTKYNEHKNNDISIRIITDHIRSITFMISDGILPSNEGRGYVLRRLLRRAAKHGKSLGIDDRFLYKLSNVVIDNSCESYPKLKDRKEYIKKVIRLEEERFDETIDSGMKILNEFIEELENSNSLLLEGEKAFKLYDTYGFPIELTEEILQEKNMGVDLEGFNKKMQNQKEMARSARTETNYMGAEDTVLNKIPLYIDTVFEGYNSLESTSKVKLMIKEGEFVSLLSQGEKGVILVANTPFYAEMGGQVGDKGIIYNENFEGKIIDCKNNVAGKILHFVEVISGSVSLEDTVLLKVDKNRRDDIRRNHTSTHLLGEALRRVLGEHVHQSGSYVDEHRLRFDFNHFESLNDKQLREVEELVNENIRKAKTVNTNLMSLEEAKKSGAVAIFDSKYSDEVRVVSIGDFSRELCGGTHVGNSGEIGLFKIVSEAGIAAGIRRIEAVTGREAVEYLYSKSDMLKEIANKFKCSEKEIVHKLDLQFNELRELRKELEEFKIKLAGSAEESILNGVKIVKGINLFTGILKDVDGNALRELADKIRSKSQNAVVLLGSNAEGKVNLVAMATKDAVEKGVHCGKIIKEVAAVAGGGGGGRPDMAQAGGKFPDKLEEAIGKCSAIMEKIVK</sequence>
<gene>
    <name evidence="1" type="primary">alaS</name>
    <name type="ordered locus">CKL_1324</name>
</gene>
<accession>A5N7T5</accession>
<protein>
    <recommendedName>
        <fullName evidence="1">Alanine--tRNA ligase</fullName>
        <ecNumber evidence="1">6.1.1.7</ecNumber>
    </recommendedName>
    <alternativeName>
        <fullName evidence="1">Alanyl-tRNA synthetase</fullName>
        <shortName evidence="1">AlaRS</shortName>
    </alternativeName>
</protein>
<proteinExistence type="inferred from homology"/>
<dbReference type="EC" id="6.1.1.7" evidence="1"/>
<dbReference type="EMBL" id="CP000673">
    <property type="protein sequence ID" value="EDK33366.1"/>
    <property type="molecule type" value="Genomic_DNA"/>
</dbReference>
<dbReference type="RefSeq" id="WP_012101711.1">
    <property type="nucleotide sequence ID" value="NC_009706.1"/>
</dbReference>
<dbReference type="SMR" id="A5N7T5"/>
<dbReference type="STRING" id="431943.CKL_1324"/>
<dbReference type="KEGG" id="ckl:CKL_1324"/>
<dbReference type="eggNOG" id="COG0013">
    <property type="taxonomic scope" value="Bacteria"/>
</dbReference>
<dbReference type="HOGENOM" id="CLU_004485_1_1_9"/>
<dbReference type="Proteomes" id="UP000002411">
    <property type="component" value="Chromosome"/>
</dbReference>
<dbReference type="GO" id="GO:0005829">
    <property type="term" value="C:cytosol"/>
    <property type="evidence" value="ECO:0007669"/>
    <property type="project" value="TreeGrafter"/>
</dbReference>
<dbReference type="GO" id="GO:0004813">
    <property type="term" value="F:alanine-tRNA ligase activity"/>
    <property type="evidence" value="ECO:0007669"/>
    <property type="project" value="UniProtKB-UniRule"/>
</dbReference>
<dbReference type="GO" id="GO:0002161">
    <property type="term" value="F:aminoacyl-tRNA deacylase activity"/>
    <property type="evidence" value="ECO:0007669"/>
    <property type="project" value="TreeGrafter"/>
</dbReference>
<dbReference type="GO" id="GO:0005524">
    <property type="term" value="F:ATP binding"/>
    <property type="evidence" value="ECO:0007669"/>
    <property type="project" value="UniProtKB-UniRule"/>
</dbReference>
<dbReference type="GO" id="GO:0140096">
    <property type="term" value="F:catalytic activity, acting on a protein"/>
    <property type="evidence" value="ECO:0007669"/>
    <property type="project" value="UniProtKB-ARBA"/>
</dbReference>
<dbReference type="GO" id="GO:0016740">
    <property type="term" value="F:transferase activity"/>
    <property type="evidence" value="ECO:0007669"/>
    <property type="project" value="UniProtKB-ARBA"/>
</dbReference>
<dbReference type="GO" id="GO:0000049">
    <property type="term" value="F:tRNA binding"/>
    <property type="evidence" value="ECO:0007669"/>
    <property type="project" value="UniProtKB-KW"/>
</dbReference>
<dbReference type="GO" id="GO:0008270">
    <property type="term" value="F:zinc ion binding"/>
    <property type="evidence" value="ECO:0007669"/>
    <property type="project" value="UniProtKB-UniRule"/>
</dbReference>
<dbReference type="GO" id="GO:0006419">
    <property type="term" value="P:alanyl-tRNA aminoacylation"/>
    <property type="evidence" value="ECO:0007669"/>
    <property type="project" value="UniProtKB-UniRule"/>
</dbReference>
<dbReference type="CDD" id="cd00673">
    <property type="entry name" value="AlaRS_core"/>
    <property type="match status" value="1"/>
</dbReference>
<dbReference type="FunFam" id="3.10.310.40:FF:000001">
    <property type="entry name" value="Alanine--tRNA ligase"/>
    <property type="match status" value="1"/>
</dbReference>
<dbReference type="FunFam" id="3.30.54.20:FF:000001">
    <property type="entry name" value="Alanine--tRNA ligase"/>
    <property type="match status" value="1"/>
</dbReference>
<dbReference type="FunFam" id="3.30.930.10:FF:000004">
    <property type="entry name" value="Alanine--tRNA ligase"/>
    <property type="match status" value="1"/>
</dbReference>
<dbReference type="FunFam" id="3.30.980.10:FF:000004">
    <property type="entry name" value="Alanine--tRNA ligase, cytoplasmic"/>
    <property type="match status" value="1"/>
</dbReference>
<dbReference type="Gene3D" id="2.40.30.130">
    <property type="match status" value="1"/>
</dbReference>
<dbReference type="Gene3D" id="3.10.310.40">
    <property type="match status" value="1"/>
</dbReference>
<dbReference type="Gene3D" id="3.30.54.20">
    <property type="match status" value="1"/>
</dbReference>
<dbReference type="Gene3D" id="6.10.250.550">
    <property type="match status" value="1"/>
</dbReference>
<dbReference type="Gene3D" id="3.30.930.10">
    <property type="entry name" value="Bira Bifunctional Protein, Domain 2"/>
    <property type="match status" value="1"/>
</dbReference>
<dbReference type="Gene3D" id="3.30.980.10">
    <property type="entry name" value="Threonyl-trna Synthetase, Chain A, domain 2"/>
    <property type="match status" value="1"/>
</dbReference>
<dbReference type="HAMAP" id="MF_00036_B">
    <property type="entry name" value="Ala_tRNA_synth_B"/>
    <property type="match status" value="1"/>
</dbReference>
<dbReference type="InterPro" id="IPR045864">
    <property type="entry name" value="aa-tRNA-synth_II/BPL/LPL"/>
</dbReference>
<dbReference type="InterPro" id="IPR002318">
    <property type="entry name" value="Ala-tRNA-lgiase_IIc"/>
</dbReference>
<dbReference type="InterPro" id="IPR018162">
    <property type="entry name" value="Ala-tRNA-ligase_IIc_anticod-bd"/>
</dbReference>
<dbReference type="InterPro" id="IPR018165">
    <property type="entry name" value="Ala-tRNA-synth_IIc_core"/>
</dbReference>
<dbReference type="InterPro" id="IPR018164">
    <property type="entry name" value="Ala-tRNA-synth_IIc_N"/>
</dbReference>
<dbReference type="InterPro" id="IPR050058">
    <property type="entry name" value="Ala-tRNA_ligase"/>
</dbReference>
<dbReference type="InterPro" id="IPR023033">
    <property type="entry name" value="Ala_tRNA_ligase_euk/bac"/>
</dbReference>
<dbReference type="InterPro" id="IPR003156">
    <property type="entry name" value="DHHA1_dom"/>
</dbReference>
<dbReference type="InterPro" id="IPR018163">
    <property type="entry name" value="Thr/Ala-tRNA-synth_IIc_edit"/>
</dbReference>
<dbReference type="InterPro" id="IPR009000">
    <property type="entry name" value="Transl_B-barrel_sf"/>
</dbReference>
<dbReference type="InterPro" id="IPR012947">
    <property type="entry name" value="tRNA_SAD"/>
</dbReference>
<dbReference type="NCBIfam" id="TIGR00344">
    <property type="entry name" value="alaS"/>
    <property type="match status" value="1"/>
</dbReference>
<dbReference type="PANTHER" id="PTHR11777:SF9">
    <property type="entry name" value="ALANINE--TRNA LIGASE, CYTOPLASMIC"/>
    <property type="match status" value="1"/>
</dbReference>
<dbReference type="PANTHER" id="PTHR11777">
    <property type="entry name" value="ALANYL-TRNA SYNTHETASE"/>
    <property type="match status" value="1"/>
</dbReference>
<dbReference type="Pfam" id="PF02272">
    <property type="entry name" value="DHHA1"/>
    <property type="match status" value="1"/>
</dbReference>
<dbReference type="Pfam" id="PF01411">
    <property type="entry name" value="tRNA-synt_2c"/>
    <property type="match status" value="1"/>
</dbReference>
<dbReference type="Pfam" id="PF07973">
    <property type="entry name" value="tRNA_SAD"/>
    <property type="match status" value="1"/>
</dbReference>
<dbReference type="PRINTS" id="PR00980">
    <property type="entry name" value="TRNASYNTHALA"/>
</dbReference>
<dbReference type="SMART" id="SM00863">
    <property type="entry name" value="tRNA_SAD"/>
    <property type="match status" value="1"/>
</dbReference>
<dbReference type="SUPFAM" id="SSF55681">
    <property type="entry name" value="Class II aaRS and biotin synthetases"/>
    <property type="match status" value="1"/>
</dbReference>
<dbReference type="SUPFAM" id="SSF101353">
    <property type="entry name" value="Putative anticodon-binding domain of alanyl-tRNA synthetase (AlaRS)"/>
    <property type="match status" value="1"/>
</dbReference>
<dbReference type="SUPFAM" id="SSF55186">
    <property type="entry name" value="ThrRS/AlaRS common domain"/>
    <property type="match status" value="1"/>
</dbReference>
<dbReference type="SUPFAM" id="SSF50447">
    <property type="entry name" value="Translation proteins"/>
    <property type="match status" value="1"/>
</dbReference>
<dbReference type="PROSITE" id="PS50860">
    <property type="entry name" value="AA_TRNA_LIGASE_II_ALA"/>
    <property type="match status" value="1"/>
</dbReference>
<evidence type="ECO:0000255" key="1">
    <source>
        <dbReference type="HAMAP-Rule" id="MF_00036"/>
    </source>
</evidence>
<feature type="chain" id="PRO_0000347567" description="Alanine--tRNA ligase">
    <location>
        <begin position="1"/>
        <end position="879"/>
    </location>
</feature>
<feature type="binding site" evidence="1">
    <location>
        <position position="566"/>
    </location>
    <ligand>
        <name>Zn(2+)</name>
        <dbReference type="ChEBI" id="CHEBI:29105"/>
    </ligand>
</feature>
<feature type="binding site" evidence="1">
    <location>
        <position position="570"/>
    </location>
    <ligand>
        <name>Zn(2+)</name>
        <dbReference type="ChEBI" id="CHEBI:29105"/>
    </ligand>
</feature>
<feature type="binding site" evidence="1">
    <location>
        <position position="668"/>
    </location>
    <ligand>
        <name>Zn(2+)</name>
        <dbReference type="ChEBI" id="CHEBI:29105"/>
    </ligand>
</feature>
<feature type="binding site" evidence="1">
    <location>
        <position position="672"/>
    </location>
    <ligand>
        <name>Zn(2+)</name>
        <dbReference type="ChEBI" id="CHEBI:29105"/>
    </ligand>
</feature>
<comment type="function">
    <text evidence="1">Catalyzes the attachment of alanine to tRNA(Ala) in a two-step reaction: alanine is first activated by ATP to form Ala-AMP and then transferred to the acceptor end of tRNA(Ala). Also edits incorrectly charged Ser-tRNA(Ala) and Gly-tRNA(Ala) via its editing domain.</text>
</comment>
<comment type="catalytic activity">
    <reaction evidence="1">
        <text>tRNA(Ala) + L-alanine + ATP = L-alanyl-tRNA(Ala) + AMP + diphosphate</text>
        <dbReference type="Rhea" id="RHEA:12540"/>
        <dbReference type="Rhea" id="RHEA-COMP:9657"/>
        <dbReference type="Rhea" id="RHEA-COMP:9923"/>
        <dbReference type="ChEBI" id="CHEBI:30616"/>
        <dbReference type="ChEBI" id="CHEBI:33019"/>
        <dbReference type="ChEBI" id="CHEBI:57972"/>
        <dbReference type="ChEBI" id="CHEBI:78442"/>
        <dbReference type="ChEBI" id="CHEBI:78497"/>
        <dbReference type="ChEBI" id="CHEBI:456215"/>
        <dbReference type="EC" id="6.1.1.7"/>
    </reaction>
</comment>
<comment type="cofactor">
    <cofactor evidence="1">
        <name>Zn(2+)</name>
        <dbReference type="ChEBI" id="CHEBI:29105"/>
    </cofactor>
    <text evidence="1">Binds 1 zinc ion per subunit.</text>
</comment>
<comment type="subcellular location">
    <subcellularLocation>
        <location evidence="1">Cytoplasm</location>
    </subcellularLocation>
</comment>
<comment type="domain">
    <text evidence="1">Consists of three domains; the N-terminal catalytic domain, the editing domain and the C-terminal C-Ala domain. The editing domain removes incorrectly charged amino acids, while the C-Ala domain, along with tRNA(Ala), serves as a bridge to cooperatively bring together the editing and aminoacylation centers thus stimulating deacylation of misacylated tRNAs.</text>
</comment>
<comment type="similarity">
    <text evidence="1">Belongs to the class-II aminoacyl-tRNA synthetase family.</text>
</comment>